<feature type="chain" id="PRO_1000189712" description="Fluoride-specific ion channel FluC">
    <location>
        <begin position="1"/>
        <end position="128"/>
    </location>
</feature>
<feature type="transmembrane region" description="Helical" evidence="1">
    <location>
        <begin position="2"/>
        <end position="22"/>
    </location>
</feature>
<feature type="transmembrane region" description="Helical" evidence="1">
    <location>
        <begin position="35"/>
        <end position="55"/>
    </location>
</feature>
<feature type="transmembrane region" description="Helical" evidence="1">
    <location>
        <begin position="67"/>
        <end position="87"/>
    </location>
</feature>
<feature type="transmembrane region" description="Helical" evidence="1">
    <location>
        <begin position="96"/>
        <end position="116"/>
    </location>
</feature>
<feature type="binding site" evidence="1">
    <location>
        <position position="75"/>
    </location>
    <ligand>
        <name>Na(+)</name>
        <dbReference type="ChEBI" id="CHEBI:29101"/>
        <note>structural</note>
    </ligand>
</feature>
<feature type="binding site" evidence="1">
    <location>
        <position position="78"/>
    </location>
    <ligand>
        <name>Na(+)</name>
        <dbReference type="ChEBI" id="CHEBI:29101"/>
        <note>structural</note>
    </ligand>
</feature>
<comment type="function">
    <text evidence="1">Fluoride-specific ion channel. Important for reducing fluoride concentration in the cell, thus reducing its toxicity.</text>
</comment>
<comment type="catalytic activity">
    <reaction evidence="1">
        <text>fluoride(in) = fluoride(out)</text>
        <dbReference type="Rhea" id="RHEA:76159"/>
        <dbReference type="ChEBI" id="CHEBI:17051"/>
    </reaction>
    <physiologicalReaction direction="left-to-right" evidence="1">
        <dbReference type="Rhea" id="RHEA:76160"/>
    </physiologicalReaction>
</comment>
<comment type="activity regulation">
    <text evidence="1">Na(+) is not transported, but it plays an essential structural role and its presence is essential for fluoride channel function.</text>
</comment>
<comment type="subcellular location">
    <subcellularLocation>
        <location evidence="1">Cell inner membrane</location>
        <topology evidence="1">Multi-pass membrane protein</topology>
    </subcellularLocation>
</comment>
<comment type="similarity">
    <text evidence="1">Belongs to the fluoride channel Fluc/FEX (TC 1.A.43) family.</text>
</comment>
<proteinExistence type="inferred from homology"/>
<accession>B4EBU8</accession>
<keyword id="KW-0997">Cell inner membrane</keyword>
<keyword id="KW-1003">Cell membrane</keyword>
<keyword id="KW-0407">Ion channel</keyword>
<keyword id="KW-0406">Ion transport</keyword>
<keyword id="KW-0472">Membrane</keyword>
<keyword id="KW-0479">Metal-binding</keyword>
<keyword id="KW-0915">Sodium</keyword>
<keyword id="KW-0812">Transmembrane</keyword>
<keyword id="KW-1133">Transmembrane helix</keyword>
<keyword id="KW-0813">Transport</keyword>
<dbReference type="EMBL" id="AM747720">
    <property type="protein sequence ID" value="CAR53386.1"/>
    <property type="molecule type" value="Genomic_DNA"/>
</dbReference>
<dbReference type="RefSeq" id="WP_006488542.1">
    <property type="nucleotide sequence ID" value="NC_011000.1"/>
</dbReference>
<dbReference type="SMR" id="B4EBU8"/>
<dbReference type="GeneID" id="56557379"/>
<dbReference type="KEGG" id="bcj:BCAL3063"/>
<dbReference type="eggNOG" id="COG0239">
    <property type="taxonomic scope" value="Bacteria"/>
</dbReference>
<dbReference type="HOGENOM" id="CLU_114342_3_3_4"/>
<dbReference type="BioCyc" id="BCEN216591:G1G1V-3397-MONOMER"/>
<dbReference type="Proteomes" id="UP000001035">
    <property type="component" value="Chromosome 1"/>
</dbReference>
<dbReference type="GO" id="GO:0005886">
    <property type="term" value="C:plasma membrane"/>
    <property type="evidence" value="ECO:0007669"/>
    <property type="project" value="UniProtKB-SubCell"/>
</dbReference>
<dbReference type="GO" id="GO:0062054">
    <property type="term" value="F:fluoride channel activity"/>
    <property type="evidence" value="ECO:0007669"/>
    <property type="project" value="UniProtKB-UniRule"/>
</dbReference>
<dbReference type="GO" id="GO:0046872">
    <property type="term" value="F:metal ion binding"/>
    <property type="evidence" value="ECO:0007669"/>
    <property type="project" value="UniProtKB-KW"/>
</dbReference>
<dbReference type="GO" id="GO:0140114">
    <property type="term" value="P:cellular detoxification of fluoride"/>
    <property type="evidence" value="ECO:0007669"/>
    <property type="project" value="UniProtKB-UniRule"/>
</dbReference>
<dbReference type="HAMAP" id="MF_00454">
    <property type="entry name" value="FluC"/>
    <property type="match status" value="1"/>
</dbReference>
<dbReference type="InterPro" id="IPR003691">
    <property type="entry name" value="FluC"/>
</dbReference>
<dbReference type="NCBIfam" id="TIGR00494">
    <property type="entry name" value="crcB"/>
    <property type="match status" value="1"/>
</dbReference>
<dbReference type="NCBIfam" id="NF010792">
    <property type="entry name" value="PRK14196.1"/>
    <property type="match status" value="1"/>
</dbReference>
<dbReference type="PANTHER" id="PTHR28259">
    <property type="entry name" value="FLUORIDE EXPORT PROTEIN 1-RELATED"/>
    <property type="match status" value="1"/>
</dbReference>
<dbReference type="PANTHER" id="PTHR28259:SF1">
    <property type="entry name" value="FLUORIDE EXPORT PROTEIN 1-RELATED"/>
    <property type="match status" value="1"/>
</dbReference>
<dbReference type="Pfam" id="PF02537">
    <property type="entry name" value="CRCB"/>
    <property type="match status" value="1"/>
</dbReference>
<gene>
    <name evidence="1" type="primary">fluC</name>
    <name evidence="1" type="synonym">crcB</name>
    <name type="ordered locus">BceJ2315_30100</name>
    <name type="ORF">BCAL3063</name>
</gene>
<sequence>MFYSIVAIFVGAGLGALLRWCLSLTLNAFFPAVPLGTLAANLLGGYVIGVAAVVFTVRVGLPPEWRLFVITGFLGGLTTFSTYSVEVMTHALEGEFGWALAVAALHLTGSFALTALGMWTARAWLAAA</sequence>
<reference key="1">
    <citation type="journal article" date="2009" name="J. Bacteriol.">
        <title>The genome of Burkholderia cenocepacia J2315, an epidemic pathogen of cystic fibrosis patients.</title>
        <authorList>
            <person name="Holden M.T."/>
            <person name="Seth-Smith H.M."/>
            <person name="Crossman L.C."/>
            <person name="Sebaihia M."/>
            <person name="Bentley S.D."/>
            <person name="Cerdeno-Tarraga A.M."/>
            <person name="Thomson N.R."/>
            <person name="Bason N."/>
            <person name="Quail M.A."/>
            <person name="Sharp S."/>
            <person name="Cherevach I."/>
            <person name="Churcher C."/>
            <person name="Goodhead I."/>
            <person name="Hauser H."/>
            <person name="Holroyd N."/>
            <person name="Mungall K."/>
            <person name="Scott P."/>
            <person name="Walker D."/>
            <person name="White B."/>
            <person name="Rose H."/>
            <person name="Iversen P."/>
            <person name="Mil-Homens D."/>
            <person name="Rocha E.P."/>
            <person name="Fialho A.M."/>
            <person name="Baldwin A."/>
            <person name="Dowson C."/>
            <person name="Barrell B.G."/>
            <person name="Govan J.R."/>
            <person name="Vandamme P."/>
            <person name="Hart C.A."/>
            <person name="Mahenthiralingam E."/>
            <person name="Parkhill J."/>
        </authorList>
    </citation>
    <scope>NUCLEOTIDE SEQUENCE [LARGE SCALE GENOMIC DNA]</scope>
    <source>
        <strain>ATCC BAA-245 / DSM 16553 / LMG 16656 / NCTC 13227 / J2315 / CF5610</strain>
    </source>
</reference>
<organism>
    <name type="scientific">Burkholderia cenocepacia (strain ATCC BAA-245 / DSM 16553 / LMG 16656 / NCTC 13227 / J2315 / CF5610)</name>
    <name type="common">Burkholderia cepacia (strain J2315)</name>
    <dbReference type="NCBI Taxonomy" id="216591"/>
    <lineage>
        <taxon>Bacteria</taxon>
        <taxon>Pseudomonadati</taxon>
        <taxon>Pseudomonadota</taxon>
        <taxon>Betaproteobacteria</taxon>
        <taxon>Burkholderiales</taxon>
        <taxon>Burkholderiaceae</taxon>
        <taxon>Burkholderia</taxon>
        <taxon>Burkholderia cepacia complex</taxon>
    </lineage>
</organism>
<protein>
    <recommendedName>
        <fullName evidence="1">Fluoride-specific ion channel FluC</fullName>
    </recommendedName>
</protein>
<name>FLUC_BURCJ</name>
<evidence type="ECO:0000255" key="1">
    <source>
        <dbReference type="HAMAP-Rule" id="MF_00454"/>
    </source>
</evidence>